<sequence length="289" mass="32264">MDIEIKDVEHRYQMKTPFERLAIYDVNAVIKEGSYVAVIGHTGSGKSTLLQHLNGLLKPTKGQIRLGEDVLEAGKKNKHLKALRKKVGIVFQFPEHQLFEETILKDIAFGPINFGMSREKAEEKAREMLKLVGLGAELSDRSPFELSGGQMRRVAIAGVLAMEPEVLVLDEPTAGLDPRGRKEIMDMFYSLHKQRNLTTILVTHSMEDAAAYADELIVMHKGTVKAKGTPRELFSRKDDIAALGLDLPETIKFQKRLEETLGITFKAPILTIEEAASEVKALFQEENAL</sequence>
<proteinExistence type="inferred from homology"/>
<comment type="function">
    <text evidence="1">ATP-binding (A) component of a common energy-coupling factor (ECF) ABC-transporter complex. Unlike classic ABC transporters this ECF transporter provides the energy necessary to transport a number of different substrates.</text>
</comment>
<comment type="subunit">
    <text evidence="1">Forms a stable energy-coupling factor (ECF) transporter complex composed of 2 membrane-embedded substrate-binding proteins (S component), 2 ATP-binding proteins (A component) and 2 transmembrane proteins (T component).</text>
</comment>
<comment type="subcellular location">
    <subcellularLocation>
        <location evidence="1">Cell membrane</location>
        <topology evidence="1">Peripheral membrane protein</topology>
    </subcellularLocation>
</comment>
<comment type="similarity">
    <text evidence="1">Belongs to the ABC transporter superfamily. Energy-coupling factor EcfA family.</text>
</comment>
<evidence type="ECO:0000255" key="1">
    <source>
        <dbReference type="HAMAP-Rule" id="MF_01710"/>
    </source>
</evidence>
<gene>
    <name evidence="1" type="primary">ecfA2</name>
    <name type="synonym">cbiO2</name>
    <name type="ordered locus">BLi00164</name>
    <name type="ordered locus">BL01022</name>
</gene>
<feature type="chain" id="PRO_0000287924" description="Energy-coupling factor transporter ATP-binding protein EcfA2">
    <location>
        <begin position="1"/>
        <end position="289"/>
    </location>
</feature>
<feature type="domain" description="ABC transporter" evidence="1">
    <location>
        <begin position="3"/>
        <end position="246"/>
    </location>
</feature>
<feature type="binding site" evidence="1">
    <location>
        <begin position="40"/>
        <end position="47"/>
    </location>
    <ligand>
        <name>ATP</name>
        <dbReference type="ChEBI" id="CHEBI:30616"/>
    </ligand>
</feature>
<dbReference type="EC" id="7.-.-.-" evidence="1"/>
<dbReference type="EMBL" id="AE017333">
    <property type="protein sequence ID" value="AAU39138.1"/>
    <property type="molecule type" value="Genomic_DNA"/>
</dbReference>
<dbReference type="EMBL" id="CP000002">
    <property type="protein sequence ID" value="AAU21793.1"/>
    <property type="molecule type" value="Genomic_DNA"/>
</dbReference>
<dbReference type="RefSeq" id="WP_003178387.1">
    <property type="nucleotide sequence ID" value="NC_006322.1"/>
</dbReference>
<dbReference type="SMR" id="Q65P76"/>
<dbReference type="STRING" id="279010.BL01022"/>
<dbReference type="KEGG" id="bld:BLi00164"/>
<dbReference type="KEGG" id="bli:BL01022"/>
<dbReference type="eggNOG" id="COG1122">
    <property type="taxonomic scope" value="Bacteria"/>
</dbReference>
<dbReference type="HOGENOM" id="CLU_000604_1_22_9"/>
<dbReference type="Proteomes" id="UP000000606">
    <property type="component" value="Chromosome"/>
</dbReference>
<dbReference type="GO" id="GO:0043190">
    <property type="term" value="C:ATP-binding cassette (ABC) transporter complex"/>
    <property type="evidence" value="ECO:0007669"/>
    <property type="project" value="TreeGrafter"/>
</dbReference>
<dbReference type="GO" id="GO:0005524">
    <property type="term" value="F:ATP binding"/>
    <property type="evidence" value="ECO:0007669"/>
    <property type="project" value="UniProtKB-KW"/>
</dbReference>
<dbReference type="GO" id="GO:0016887">
    <property type="term" value="F:ATP hydrolysis activity"/>
    <property type="evidence" value="ECO:0007669"/>
    <property type="project" value="InterPro"/>
</dbReference>
<dbReference type="GO" id="GO:0042626">
    <property type="term" value="F:ATPase-coupled transmembrane transporter activity"/>
    <property type="evidence" value="ECO:0007669"/>
    <property type="project" value="TreeGrafter"/>
</dbReference>
<dbReference type="CDD" id="cd03225">
    <property type="entry name" value="ABC_cobalt_CbiO_domain1"/>
    <property type="match status" value="1"/>
</dbReference>
<dbReference type="FunFam" id="3.40.50.300:FF:000224">
    <property type="entry name" value="Energy-coupling factor transporter ATP-binding protein EcfA"/>
    <property type="match status" value="1"/>
</dbReference>
<dbReference type="Gene3D" id="3.40.50.300">
    <property type="entry name" value="P-loop containing nucleotide triphosphate hydrolases"/>
    <property type="match status" value="1"/>
</dbReference>
<dbReference type="InterPro" id="IPR003593">
    <property type="entry name" value="AAA+_ATPase"/>
</dbReference>
<dbReference type="InterPro" id="IPR003439">
    <property type="entry name" value="ABC_transporter-like_ATP-bd"/>
</dbReference>
<dbReference type="InterPro" id="IPR017871">
    <property type="entry name" value="ABC_transporter-like_CS"/>
</dbReference>
<dbReference type="InterPro" id="IPR015856">
    <property type="entry name" value="ABC_transpr_CbiO/EcfA_su"/>
</dbReference>
<dbReference type="InterPro" id="IPR050095">
    <property type="entry name" value="ECF_ABC_transporter_ATP-bd"/>
</dbReference>
<dbReference type="InterPro" id="IPR030946">
    <property type="entry name" value="EcfA2"/>
</dbReference>
<dbReference type="InterPro" id="IPR027417">
    <property type="entry name" value="P-loop_NTPase"/>
</dbReference>
<dbReference type="NCBIfam" id="TIGR04521">
    <property type="entry name" value="ECF_ATPase_2"/>
    <property type="match status" value="1"/>
</dbReference>
<dbReference type="NCBIfam" id="NF010155">
    <property type="entry name" value="PRK13634.1"/>
    <property type="match status" value="1"/>
</dbReference>
<dbReference type="PANTHER" id="PTHR43553:SF27">
    <property type="entry name" value="ENERGY-COUPLING FACTOR TRANSPORTER ATP-BINDING PROTEIN ECFA2"/>
    <property type="match status" value="1"/>
</dbReference>
<dbReference type="PANTHER" id="PTHR43553">
    <property type="entry name" value="HEAVY METAL TRANSPORTER"/>
    <property type="match status" value="1"/>
</dbReference>
<dbReference type="Pfam" id="PF00005">
    <property type="entry name" value="ABC_tran"/>
    <property type="match status" value="1"/>
</dbReference>
<dbReference type="SMART" id="SM00382">
    <property type="entry name" value="AAA"/>
    <property type="match status" value="1"/>
</dbReference>
<dbReference type="SUPFAM" id="SSF52540">
    <property type="entry name" value="P-loop containing nucleoside triphosphate hydrolases"/>
    <property type="match status" value="1"/>
</dbReference>
<dbReference type="PROSITE" id="PS00211">
    <property type="entry name" value="ABC_TRANSPORTER_1"/>
    <property type="match status" value="1"/>
</dbReference>
<dbReference type="PROSITE" id="PS50893">
    <property type="entry name" value="ABC_TRANSPORTER_2"/>
    <property type="match status" value="1"/>
</dbReference>
<dbReference type="PROSITE" id="PS51246">
    <property type="entry name" value="CBIO"/>
    <property type="match status" value="1"/>
</dbReference>
<keyword id="KW-0067">ATP-binding</keyword>
<keyword id="KW-1003">Cell membrane</keyword>
<keyword id="KW-0472">Membrane</keyword>
<keyword id="KW-0547">Nucleotide-binding</keyword>
<keyword id="KW-1185">Reference proteome</keyword>
<keyword id="KW-1278">Translocase</keyword>
<keyword id="KW-0813">Transport</keyword>
<name>ECFA2_BACLD</name>
<protein>
    <recommendedName>
        <fullName evidence="1">Energy-coupling factor transporter ATP-binding protein EcfA2</fullName>
        <shortName evidence="1">ECF transporter A component EcfA2</shortName>
        <ecNumber evidence="1">7.-.-.-</ecNumber>
    </recommendedName>
</protein>
<accession>Q65P76</accession>
<accession>Q62ZL5</accession>
<reference key="1">
    <citation type="journal article" date="2004" name="J. Mol. Microbiol. Biotechnol.">
        <title>The complete genome sequence of Bacillus licheniformis DSM13, an organism with great industrial potential.</title>
        <authorList>
            <person name="Veith B."/>
            <person name="Herzberg C."/>
            <person name="Steckel S."/>
            <person name="Feesche J."/>
            <person name="Maurer K.H."/>
            <person name="Ehrenreich P."/>
            <person name="Baeumer S."/>
            <person name="Henne A."/>
            <person name="Liesegang H."/>
            <person name="Merkl R."/>
            <person name="Ehrenreich A."/>
            <person name="Gottschalk G."/>
        </authorList>
    </citation>
    <scope>NUCLEOTIDE SEQUENCE [LARGE SCALE GENOMIC DNA]</scope>
    <source>
        <strain>ATCC 14580 / DSM 13 / JCM 2505 / CCUG 7422 / NBRC 12200 / NCIMB 9375 / NCTC 10341 / NRRL NRS-1264 / Gibson 46</strain>
    </source>
</reference>
<reference key="2">
    <citation type="journal article" date="2004" name="Genome Biol.">
        <title>Complete genome sequence of the industrial bacterium Bacillus licheniformis and comparisons with closely related Bacillus species.</title>
        <authorList>
            <person name="Rey M.W."/>
            <person name="Ramaiya P."/>
            <person name="Nelson B.A."/>
            <person name="Brody-Karpin S.D."/>
            <person name="Zaretsky E.J."/>
            <person name="Tang M."/>
            <person name="Lopez de Leon A."/>
            <person name="Xiang H."/>
            <person name="Gusti V."/>
            <person name="Clausen I.G."/>
            <person name="Olsen P.B."/>
            <person name="Rasmussen M.D."/>
            <person name="Andersen J.T."/>
            <person name="Joergensen P.L."/>
            <person name="Larsen T.S."/>
            <person name="Sorokin A."/>
            <person name="Bolotin A."/>
            <person name="Lapidus A."/>
            <person name="Galleron N."/>
            <person name="Ehrlich S.D."/>
            <person name="Berka R.M."/>
        </authorList>
    </citation>
    <scope>NUCLEOTIDE SEQUENCE [LARGE SCALE GENOMIC DNA]</scope>
    <source>
        <strain>ATCC 14580 / DSM 13 / JCM 2505 / CCUG 7422 / NBRC 12200 / NCIMB 9375 / NCTC 10341 / NRRL NRS-1264 / Gibson 46</strain>
    </source>
</reference>
<organism>
    <name type="scientific">Bacillus licheniformis (strain ATCC 14580 / DSM 13 / JCM 2505 / CCUG 7422 / NBRC 12200 / NCIMB 9375 / NCTC 10341 / NRRL NRS-1264 / Gibson 46)</name>
    <dbReference type="NCBI Taxonomy" id="279010"/>
    <lineage>
        <taxon>Bacteria</taxon>
        <taxon>Bacillati</taxon>
        <taxon>Bacillota</taxon>
        <taxon>Bacilli</taxon>
        <taxon>Bacillales</taxon>
        <taxon>Bacillaceae</taxon>
        <taxon>Bacillus</taxon>
    </lineage>
</organism>